<accession>Q86IA3</accession>
<accession>O15735</accession>
<accession>Q552H4</accession>
<dbReference type="EC" id="5.3.4.1"/>
<dbReference type="EMBL" id="AF019112">
    <property type="protein sequence ID" value="AAB86685.1"/>
    <property type="molecule type" value="mRNA"/>
</dbReference>
<dbReference type="EMBL" id="AAFI02000014">
    <property type="protein sequence ID" value="EAL69370.1"/>
    <property type="molecule type" value="Genomic_DNA"/>
</dbReference>
<dbReference type="RefSeq" id="XP_643357.1">
    <property type="nucleotide sequence ID" value="XM_638265.1"/>
</dbReference>
<dbReference type="SMR" id="Q86IA3"/>
<dbReference type="FunCoup" id="Q86IA3">
    <property type="interactions" value="576"/>
</dbReference>
<dbReference type="STRING" id="44689.Q86IA3"/>
<dbReference type="PaxDb" id="44689-DDB0185040"/>
<dbReference type="ABCD" id="Q86IA3">
    <property type="antibodies" value="2 sequenced antibodies"/>
</dbReference>
<dbReference type="EnsemblProtists" id="EAL69370">
    <property type="protein sequence ID" value="EAL69370"/>
    <property type="gene ID" value="DDB_G0276141"/>
</dbReference>
<dbReference type="GeneID" id="8620407"/>
<dbReference type="KEGG" id="ddi:DDB_G0276141"/>
<dbReference type="dictyBase" id="DDB_G0276141">
    <property type="gene designation" value="pdi1"/>
</dbReference>
<dbReference type="VEuPathDB" id="AmoebaDB:DDB_G0276141"/>
<dbReference type="eggNOG" id="KOG0191">
    <property type="taxonomic scope" value="Eukaryota"/>
</dbReference>
<dbReference type="HOGENOM" id="CLU_038617_1_0_1"/>
<dbReference type="InParanoid" id="Q86IA3"/>
<dbReference type="OMA" id="FINEHAG"/>
<dbReference type="PhylomeDB" id="Q86IA3"/>
<dbReference type="PRO" id="PR:Q86IA3"/>
<dbReference type="Proteomes" id="UP000002195">
    <property type="component" value="Chromosome 2"/>
</dbReference>
<dbReference type="GO" id="GO:0005783">
    <property type="term" value="C:endoplasmic reticulum"/>
    <property type="evidence" value="ECO:0000314"/>
    <property type="project" value="dictyBase"/>
</dbReference>
<dbReference type="GO" id="GO:0005788">
    <property type="term" value="C:endoplasmic reticulum lumen"/>
    <property type="evidence" value="ECO:0007669"/>
    <property type="project" value="UniProtKB-SubCell"/>
</dbReference>
<dbReference type="GO" id="GO:0005811">
    <property type="term" value="C:lipid droplet"/>
    <property type="evidence" value="ECO:0007005"/>
    <property type="project" value="dictyBase"/>
</dbReference>
<dbReference type="GO" id="GO:0042175">
    <property type="term" value="C:nuclear outer membrane-endoplasmic reticulum membrane network"/>
    <property type="evidence" value="ECO:0000314"/>
    <property type="project" value="dictyBase"/>
</dbReference>
<dbReference type="GO" id="GO:0045335">
    <property type="term" value="C:phagocytic vesicle"/>
    <property type="evidence" value="ECO:0007005"/>
    <property type="project" value="dictyBase"/>
</dbReference>
<dbReference type="GO" id="GO:0003756">
    <property type="term" value="F:protein disulfide isomerase activity"/>
    <property type="evidence" value="ECO:0000316"/>
    <property type="project" value="dictyBase"/>
</dbReference>
<dbReference type="GO" id="GO:0006457">
    <property type="term" value="P:protein folding"/>
    <property type="evidence" value="ECO:0000250"/>
    <property type="project" value="dictyBase"/>
</dbReference>
<dbReference type="CDD" id="cd00238">
    <property type="entry name" value="ERp29c"/>
    <property type="match status" value="1"/>
</dbReference>
<dbReference type="CDD" id="cd02998">
    <property type="entry name" value="PDI_a_ERp38"/>
    <property type="match status" value="2"/>
</dbReference>
<dbReference type="FunFam" id="1.20.1150.12:FF:000001">
    <property type="entry name" value="Endoplasmic reticulum resident protein 29"/>
    <property type="match status" value="1"/>
</dbReference>
<dbReference type="FunFam" id="3.40.30.10:FF:000107">
    <property type="entry name" value="Protein disulfide-isomerase 5-2"/>
    <property type="match status" value="1"/>
</dbReference>
<dbReference type="FunFam" id="3.40.30.10:FF:000032">
    <property type="entry name" value="Protein disulfide-isomerase A6 homolog"/>
    <property type="match status" value="1"/>
</dbReference>
<dbReference type="Gene3D" id="1.20.1150.12">
    <property type="entry name" value="Endoplasmic reticulum resident protein 29, C-terminal domain"/>
    <property type="match status" value="1"/>
</dbReference>
<dbReference type="Gene3D" id="3.40.30.10">
    <property type="entry name" value="Glutaredoxin"/>
    <property type="match status" value="2"/>
</dbReference>
<dbReference type="InterPro" id="IPR011679">
    <property type="entry name" value="ERp29_C"/>
</dbReference>
<dbReference type="InterPro" id="IPR036356">
    <property type="entry name" value="ERp29_C_sf"/>
</dbReference>
<dbReference type="InterPro" id="IPR051063">
    <property type="entry name" value="PDI"/>
</dbReference>
<dbReference type="InterPro" id="IPR005788">
    <property type="entry name" value="PDI_thioredoxin-like_dom"/>
</dbReference>
<dbReference type="InterPro" id="IPR036249">
    <property type="entry name" value="Thioredoxin-like_sf"/>
</dbReference>
<dbReference type="InterPro" id="IPR017937">
    <property type="entry name" value="Thioredoxin_CS"/>
</dbReference>
<dbReference type="InterPro" id="IPR013766">
    <property type="entry name" value="Thioredoxin_domain"/>
</dbReference>
<dbReference type="NCBIfam" id="TIGR01126">
    <property type="entry name" value="pdi_dom"/>
    <property type="match status" value="2"/>
</dbReference>
<dbReference type="PANTHER" id="PTHR45672:SF11">
    <property type="entry name" value="PROTEIN DISULFIDE-ISOMERASE C17H9.14C"/>
    <property type="match status" value="1"/>
</dbReference>
<dbReference type="PANTHER" id="PTHR45672">
    <property type="entry name" value="PROTEIN DISULFIDE-ISOMERASE C17H9.14C-RELATED"/>
    <property type="match status" value="1"/>
</dbReference>
<dbReference type="Pfam" id="PF07749">
    <property type="entry name" value="ERp29"/>
    <property type="match status" value="1"/>
</dbReference>
<dbReference type="Pfam" id="PF00085">
    <property type="entry name" value="Thioredoxin"/>
    <property type="match status" value="2"/>
</dbReference>
<dbReference type="PRINTS" id="PR00421">
    <property type="entry name" value="THIOREDOXIN"/>
</dbReference>
<dbReference type="SUPFAM" id="SSF47933">
    <property type="entry name" value="ERP29 C domain-like"/>
    <property type="match status" value="1"/>
</dbReference>
<dbReference type="SUPFAM" id="SSF52833">
    <property type="entry name" value="Thioredoxin-like"/>
    <property type="match status" value="2"/>
</dbReference>
<dbReference type="PROSITE" id="PS00194">
    <property type="entry name" value="THIOREDOXIN_1"/>
    <property type="match status" value="2"/>
</dbReference>
<dbReference type="PROSITE" id="PS51352">
    <property type="entry name" value="THIOREDOXIN_2"/>
    <property type="match status" value="2"/>
</dbReference>
<keyword id="KW-1015">Disulfide bond</keyword>
<keyword id="KW-0256">Endoplasmic reticulum</keyword>
<keyword id="KW-0413">Isomerase</keyword>
<keyword id="KW-0676">Redox-active center</keyword>
<keyword id="KW-1185">Reference proteome</keyword>
<keyword id="KW-0677">Repeat</keyword>
<keyword id="KW-0732">Signal</keyword>
<evidence type="ECO:0000250" key="1"/>
<evidence type="ECO:0000255" key="2"/>
<evidence type="ECO:0000255" key="3">
    <source>
        <dbReference type="PROSITE-ProRule" id="PRU00691"/>
    </source>
</evidence>
<evidence type="ECO:0000269" key="4">
    <source>
    </source>
</evidence>
<evidence type="ECO:0000305" key="5"/>
<organism>
    <name type="scientific">Dictyostelium discoideum</name>
    <name type="common">Social amoeba</name>
    <dbReference type="NCBI Taxonomy" id="44689"/>
    <lineage>
        <taxon>Eukaryota</taxon>
        <taxon>Amoebozoa</taxon>
        <taxon>Evosea</taxon>
        <taxon>Eumycetozoa</taxon>
        <taxon>Dictyostelia</taxon>
        <taxon>Dictyosteliales</taxon>
        <taxon>Dictyosteliaceae</taxon>
        <taxon>Dictyostelium</taxon>
    </lineage>
</organism>
<comment type="function">
    <text evidence="1">Participates in the folding of proteins containing disulfide bonds, may be involved in glycosylation, prolyl hydroxylation and triglyceride transfer.</text>
</comment>
<comment type="catalytic activity">
    <reaction>
        <text>Catalyzes the rearrangement of -S-S- bonds in proteins.</text>
        <dbReference type="EC" id="5.3.4.1"/>
    </reaction>
</comment>
<comment type="subcellular location">
    <subcellularLocation>
        <location evidence="4">Endoplasmic reticulum lumen</location>
    </subcellularLocation>
</comment>
<comment type="similarity">
    <text evidence="5">Belongs to the protein disulfide isomerase family.</text>
</comment>
<proteinExistence type="evidence at protein level"/>
<feature type="signal peptide" evidence="2">
    <location>
        <begin position="1"/>
        <end position="20"/>
    </location>
</feature>
<feature type="chain" id="PRO_0000327718" description="Protein disulfide-isomerase 1">
    <location>
        <begin position="21"/>
        <end position="363"/>
    </location>
</feature>
<feature type="domain" description="Thioredoxin 1" evidence="3">
    <location>
        <begin position="21"/>
        <end position="132"/>
    </location>
</feature>
<feature type="domain" description="Thioredoxin 2" evidence="3">
    <location>
        <begin position="133"/>
        <end position="285"/>
    </location>
</feature>
<feature type="active site" description="Nucleophile" evidence="1">
    <location>
        <position position="51"/>
    </location>
</feature>
<feature type="active site" description="Nucleophile" evidence="1">
    <location>
        <position position="54"/>
    </location>
</feature>
<feature type="active site" description="Nucleophile" evidence="1">
    <location>
        <position position="172"/>
    </location>
</feature>
<feature type="active site" description="Nucleophile" evidence="1">
    <location>
        <position position="175"/>
    </location>
</feature>
<feature type="disulfide bond" description="Redox-active" evidence="3">
    <location>
        <begin position="51"/>
        <end position="54"/>
    </location>
</feature>
<feature type="disulfide bond" description="Redox-active" evidence="3">
    <location>
        <begin position="172"/>
        <end position="175"/>
    </location>
</feature>
<feature type="sequence conflict" description="In Ref. 1; AAB86685." evidence="5" ref="1">
    <original>T</original>
    <variation>I</variation>
    <location>
        <position position="307"/>
    </location>
</feature>
<protein>
    <recommendedName>
        <fullName>Protein disulfide-isomerase 1</fullName>
        <shortName>PDI1</shortName>
        <ecNumber>5.3.4.1</ecNumber>
    </recommendedName>
</protein>
<sequence>MKILLFVTLIALAFVALCSAEGNVVVLSPDNFDTVVDGSKTVFVKFYAPWCGHCKKLAPDFEILADTFAPVSNKVVIAKVDCDQADNKALCSKYDVSGYPTLKIFDKSTTAKDYNGARSVDELLTYINNHAKTNVKVKKAPSNVVDLSPSNFDSVVLDKSKNVLVEFYAPWCGHCKKLMPDYEILGNTYANEKDVVIAKIDCDAADNKAICSKYGVTGFPTLKWFGKQSKDGEKYEQGRDLDTFINYINKQAGVNRVKGGKLAVGAGRVEQLDTIATEFIAAAAEVRKELVKKAQTVVDSLPEELRTEGSYYVKVMKTIAEKSIDFVTTEIARITKLVSGSMSGKKADEFAKKLNILESFKSK</sequence>
<gene>
    <name type="primary">pdi1</name>
    <name type="ORF">DDB_G0276141</name>
</gene>
<name>PDI1_DICDI</name>
<reference key="1">
    <citation type="journal article" date="1997" name="FEBS Lett.">
        <title>Dictyostelium discoideum protein disulfide isomerase, an endoplasmic reticulum resident enzyme lacking a KDEL-type retrieval signal.</title>
        <authorList>
            <person name="Monnat J."/>
            <person name="Hacker U."/>
            <person name="Geissler H."/>
            <person name="Rauchenberger R."/>
            <person name="Neuhaus E.M."/>
            <person name="Maniak M."/>
            <person name="Soldati T."/>
        </authorList>
    </citation>
    <scope>NUCLEOTIDE SEQUENCE [MRNA]</scope>
    <scope>SUBCELLULAR LOCATION</scope>
    <source>
        <strain>AX2</strain>
    </source>
</reference>
<reference key="2">
    <citation type="journal article" date="2002" name="Nature">
        <title>Sequence and analysis of chromosome 2 of Dictyostelium discoideum.</title>
        <authorList>
            <person name="Gloeckner G."/>
            <person name="Eichinger L."/>
            <person name="Szafranski K."/>
            <person name="Pachebat J.A."/>
            <person name="Bankier A.T."/>
            <person name="Dear P.H."/>
            <person name="Lehmann R."/>
            <person name="Baumgart C."/>
            <person name="Parra G."/>
            <person name="Abril J.F."/>
            <person name="Guigo R."/>
            <person name="Kumpf K."/>
            <person name="Tunggal B."/>
            <person name="Cox E.C."/>
            <person name="Quail M.A."/>
            <person name="Platzer M."/>
            <person name="Rosenthal A."/>
            <person name="Noegel A.A."/>
        </authorList>
    </citation>
    <scope>NUCLEOTIDE SEQUENCE [LARGE SCALE GENOMIC DNA]</scope>
    <source>
        <strain>AX4</strain>
    </source>
</reference>
<reference key="3">
    <citation type="journal article" date="2005" name="Nature">
        <title>The genome of the social amoeba Dictyostelium discoideum.</title>
        <authorList>
            <person name="Eichinger L."/>
            <person name="Pachebat J.A."/>
            <person name="Gloeckner G."/>
            <person name="Rajandream M.A."/>
            <person name="Sucgang R."/>
            <person name="Berriman M."/>
            <person name="Song J."/>
            <person name="Olsen R."/>
            <person name="Szafranski K."/>
            <person name="Xu Q."/>
            <person name="Tunggal B."/>
            <person name="Kummerfeld S."/>
            <person name="Madera M."/>
            <person name="Konfortov B.A."/>
            <person name="Rivero F."/>
            <person name="Bankier A.T."/>
            <person name="Lehmann R."/>
            <person name="Hamlin N."/>
            <person name="Davies R."/>
            <person name="Gaudet P."/>
            <person name="Fey P."/>
            <person name="Pilcher K."/>
            <person name="Chen G."/>
            <person name="Saunders D."/>
            <person name="Sodergren E.J."/>
            <person name="Davis P."/>
            <person name="Kerhornou A."/>
            <person name="Nie X."/>
            <person name="Hall N."/>
            <person name="Anjard C."/>
            <person name="Hemphill L."/>
            <person name="Bason N."/>
            <person name="Farbrother P."/>
            <person name="Desany B."/>
            <person name="Just E."/>
            <person name="Morio T."/>
            <person name="Rost R."/>
            <person name="Churcher C.M."/>
            <person name="Cooper J."/>
            <person name="Haydock S."/>
            <person name="van Driessche N."/>
            <person name="Cronin A."/>
            <person name="Goodhead I."/>
            <person name="Muzny D.M."/>
            <person name="Mourier T."/>
            <person name="Pain A."/>
            <person name="Lu M."/>
            <person name="Harper D."/>
            <person name="Lindsay R."/>
            <person name="Hauser H."/>
            <person name="James K.D."/>
            <person name="Quiles M."/>
            <person name="Madan Babu M."/>
            <person name="Saito T."/>
            <person name="Buchrieser C."/>
            <person name="Wardroper A."/>
            <person name="Felder M."/>
            <person name="Thangavelu M."/>
            <person name="Johnson D."/>
            <person name="Knights A."/>
            <person name="Loulseged H."/>
            <person name="Mungall K.L."/>
            <person name="Oliver K."/>
            <person name="Price C."/>
            <person name="Quail M.A."/>
            <person name="Urushihara H."/>
            <person name="Hernandez J."/>
            <person name="Rabbinowitsch E."/>
            <person name="Steffen D."/>
            <person name="Sanders M."/>
            <person name="Ma J."/>
            <person name="Kohara Y."/>
            <person name="Sharp S."/>
            <person name="Simmonds M.N."/>
            <person name="Spiegler S."/>
            <person name="Tivey A."/>
            <person name="Sugano S."/>
            <person name="White B."/>
            <person name="Walker D."/>
            <person name="Woodward J.R."/>
            <person name="Winckler T."/>
            <person name="Tanaka Y."/>
            <person name="Shaulsky G."/>
            <person name="Schleicher M."/>
            <person name="Weinstock G.M."/>
            <person name="Rosenthal A."/>
            <person name="Cox E.C."/>
            <person name="Chisholm R.L."/>
            <person name="Gibbs R.A."/>
            <person name="Loomis W.F."/>
            <person name="Platzer M."/>
            <person name="Kay R.R."/>
            <person name="Williams J.G."/>
            <person name="Dear P.H."/>
            <person name="Noegel A.A."/>
            <person name="Barrell B.G."/>
            <person name="Kuspa A."/>
        </authorList>
    </citation>
    <scope>NUCLEOTIDE SEQUENCE [LARGE SCALE GENOMIC DNA]</scope>
    <source>
        <strain>AX4</strain>
    </source>
</reference>
<reference key="4">
    <citation type="journal article" date="2006" name="Mol. Cell. Proteomics">
        <title>Proteomics fingerprinting of phagosome maturation and evidence for the role of a Galpha during uptake.</title>
        <authorList>
            <person name="Gotthardt D."/>
            <person name="Blancheteau V."/>
            <person name="Bosserhoff A."/>
            <person name="Ruppert T."/>
            <person name="Delorenzi M."/>
            <person name="Soldati T."/>
        </authorList>
    </citation>
    <scope>IDENTIFICATION BY MASS SPECTROMETRY [LARGE SCALE ANALYSIS]</scope>
    <source>
        <strain>AX2</strain>
    </source>
</reference>